<accession>Q8DNZ8</accession>
<name>GATD_STRR6</name>
<gene>
    <name evidence="1 5" type="primary">gatD</name>
    <name evidence="8" type="ordered locus">spr1444</name>
</gene>
<organism>
    <name type="scientific">Streptococcus pneumoniae (strain ATCC BAA-255 / R6)</name>
    <dbReference type="NCBI Taxonomy" id="171101"/>
    <lineage>
        <taxon>Bacteria</taxon>
        <taxon>Bacillati</taxon>
        <taxon>Bacillota</taxon>
        <taxon>Bacilli</taxon>
        <taxon>Lactobacillales</taxon>
        <taxon>Streptococcaceae</taxon>
        <taxon>Streptococcus</taxon>
    </lineage>
</organism>
<proteinExistence type="evidence at protein level"/>
<protein>
    <recommendedName>
        <fullName evidence="1 6">Lipid II isoglutaminyl synthase (glutamine-hydrolyzing) subunit GatD</fullName>
        <ecNumber evidence="1 3 4">6.3.5.13</ecNumber>
    </recommendedName>
    <alternativeName>
        <fullName evidence="1 6">Lipid II isoglutaminyl synthase glutaminase subunit</fullName>
        <ecNumber evidence="1 4">3.5.1.2</ecNumber>
    </alternativeName>
</protein>
<feature type="chain" id="PRO_0000446942" description="Lipid II isoglutaminyl synthase (glutamine-hydrolyzing) subunit GatD">
    <location>
        <begin position="1"/>
        <end position="260"/>
    </location>
</feature>
<feature type="domain" description="GATase cobBQ-type" evidence="2">
    <location>
        <begin position="16"/>
        <end position="214"/>
    </location>
</feature>
<feature type="active site" description="Nucleophile" evidence="1 2 7">
    <location>
        <position position="107"/>
    </location>
</feature>
<feature type="active site" evidence="1 2 7">
    <location>
        <position position="206"/>
    </location>
</feature>
<feature type="binding site" evidence="1 4">
    <location>
        <position position="142"/>
    </location>
    <ligand>
        <name>substrate</name>
    </ligand>
</feature>
<feature type="strand" evidence="10">
    <location>
        <begin position="3"/>
        <end position="7"/>
    </location>
</feature>
<feature type="strand" evidence="10">
    <location>
        <begin position="14"/>
        <end position="22"/>
    </location>
</feature>
<feature type="turn" evidence="10">
    <location>
        <begin position="23"/>
        <end position="26"/>
    </location>
</feature>
<feature type="turn" evidence="10">
    <location>
        <begin position="30"/>
        <end position="33"/>
    </location>
</feature>
<feature type="helix" evidence="10">
    <location>
        <begin position="34"/>
        <end position="45"/>
    </location>
</feature>
<feature type="strand" evidence="10">
    <location>
        <begin position="48"/>
        <end position="55"/>
    </location>
</feature>
<feature type="turn" evidence="10">
    <location>
        <begin position="63"/>
        <end position="65"/>
    </location>
</feature>
<feature type="strand" evidence="10">
    <location>
        <begin position="67"/>
        <end position="71"/>
    </location>
</feature>
<feature type="helix" evidence="10">
    <location>
        <begin position="76"/>
        <end position="85"/>
    </location>
</feature>
<feature type="helix" evidence="10">
    <location>
        <begin position="86"/>
        <end position="89"/>
    </location>
</feature>
<feature type="helix" evidence="10">
    <location>
        <begin position="90"/>
        <end position="98"/>
    </location>
</feature>
<feature type="strand" evidence="10">
    <location>
        <begin position="102"/>
        <end position="106"/>
    </location>
</feature>
<feature type="helix" evidence="10">
    <location>
        <begin position="108"/>
        <end position="113"/>
    </location>
</feature>
<feature type="strand" evidence="10">
    <location>
        <begin position="114"/>
        <end position="118"/>
    </location>
</feature>
<feature type="strand" evidence="10">
    <location>
        <begin position="124"/>
        <end position="126"/>
    </location>
</feature>
<feature type="strand" evidence="10">
    <location>
        <begin position="130"/>
        <end position="132"/>
    </location>
</feature>
<feature type="strand" evidence="10">
    <location>
        <begin position="134"/>
        <end position="136"/>
    </location>
</feature>
<feature type="strand" evidence="10">
    <location>
        <begin position="143"/>
        <end position="151"/>
    </location>
</feature>
<feature type="turn" evidence="10">
    <location>
        <begin position="152"/>
        <end position="155"/>
    </location>
</feature>
<feature type="strand" evidence="10">
    <location>
        <begin position="156"/>
        <end position="165"/>
    </location>
</feature>
<feature type="strand" evidence="10">
    <location>
        <begin position="167"/>
        <end position="169"/>
    </location>
</feature>
<feature type="strand" evidence="10">
    <location>
        <begin position="177"/>
        <end position="183"/>
    </location>
</feature>
<feature type="strand" evidence="10">
    <location>
        <begin position="191"/>
        <end position="203"/>
    </location>
</feature>
<feature type="helix" evidence="10">
    <location>
        <begin position="209"/>
        <end position="212"/>
    </location>
</feature>
<feature type="helix" evidence="10">
    <location>
        <begin position="214"/>
        <end position="229"/>
    </location>
</feature>
<feature type="helix" evidence="10">
    <location>
        <begin position="238"/>
        <end position="241"/>
    </location>
</feature>
<feature type="helix" evidence="10">
    <location>
        <begin position="243"/>
        <end position="245"/>
    </location>
</feature>
<reference key="1">
    <citation type="journal article" date="2001" name="J. Bacteriol.">
        <title>Genome of the bacterium Streptococcus pneumoniae strain R6.</title>
        <authorList>
            <person name="Hoskins J."/>
            <person name="Alborn W.E. Jr."/>
            <person name="Arnold J."/>
            <person name="Blaszczak L.C."/>
            <person name="Burgett S."/>
            <person name="DeHoff B.S."/>
            <person name="Estrem S.T."/>
            <person name="Fritz L."/>
            <person name="Fu D.-J."/>
            <person name="Fuller W."/>
            <person name="Geringer C."/>
            <person name="Gilmour R."/>
            <person name="Glass J.S."/>
            <person name="Khoja H."/>
            <person name="Kraft A.R."/>
            <person name="Lagace R.E."/>
            <person name="LeBlanc D.J."/>
            <person name="Lee L.N."/>
            <person name="Lefkowitz E.J."/>
            <person name="Lu J."/>
            <person name="Matsushima P."/>
            <person name="McAhren S.M."/>
            <person name="McHenney M."/>
            <person name="McLeaster K."/>
            <person name="Mundy C.W."/>
            <person name="Nicas T.I."/>
            <person name="Norris F.H."/>
            <person name="O'Gara M."/>
            <person name="Peery R.B."/>
            <person name="Robertson G.T."/>
            <person name="Rockey P."/>
            <person name="Sun P.-M."/>
            <person name="Winkler M.E."/>
            <person name="Yang Y."/>
            <person name="Young-Bellido M."/>
            <person name="Zhao G."/>
            <person name="Zook C.A."/>
            <person name="Baltz R.H."/>
            <person name="Jaskunas S.R."/>
            <person name="Rosteck P.R. Jr."/>
            <person name="Skatrud P.L."/>
            <person name="Glass J.I."/>
        </authorList>
    </citation>
    <scope>NUCLEOTIDE SEQUENCE [LARGE SCALE GENOMIC DNA]</scope>
    <source>
        <strain>ATCC BAA-255 / R6</strain>
    </source>
</reference>
<reference key="2">
    <citation type="journal article" date="2013" name="ACS Chem. Biol.">
        <title>In vitro reconstitution of peptidoglycan assembly from the Gram-positive pathogen Streptococcus pneumoniae.</title>
        <authorList>
            <person name="Zapun A."/>
            <person name="Philippe J."/>
            <person name="Abrahams K.A."/>
            <person name="Signor L."/>
            <person name="Roper D.I."/>
            <person name="Breukink E."/>
            <person name="Vernet T."/>
        </authorList>
    </citation>
    <scope>FUNCTION</scope>
    <scope>CATALYTIC ACTIVITY</scope>
    <scope>PATHWAY</scope>
    <source>
        <strain>ATCC BAA-255 / R6</strain>
    </source>
</reference>
<reference evidence="9" key="3">
    <citation type="journal article" date="2018" name="Nat. Commun.">
        <title>Structure of the essential peptidoglycan amidotransferase MurT/GatD complex from Streptococcus pneumoniae.</title>
        <authorList>
            <person name="Morlot C."/>
            <person name="Straume D."/>
            <person name="Peters K."/>
            <person name="Hegnar O.A."/>
            <person name="Simon N."/>
            <person name="Villard A.M."/>
            <person name="Contreras-Martel C."/>
            <person name="Leisico F."/>
            <person name="Breukink E."/>
            <person name="Gravier-Pelletier C."/>
            <person name="Le Corre L."/>
            <person name="Vollmer W."/>
            <person name="Pietrancosta N."/>
            <person name="Havarstein L.S."/>
            <person name="Zapun A."/>
        </authorList>
    </citation>
    <scope>X-RAY CRYSTALLOGRAPHY (3.00 ANGSTROMS) IN COMPLEX WITH MURT AND GLUTAMINE</scope>
    <scope>FUNCTION</scope>
    <scope>CATALYTIC ACTIVITY</scope>
    <scope>BIOPHYSICOCHEMICAL PROPERTIES</scope>
    <scope>SUBUNIT</scope>
    <scope>DISRUPTION PHENOTYPE</scope>
    <scope>ACTIVE SITE</scope>
</reference>
<sequence length="260" mass="29193">MVYTSLSSKDGNYPYQLNIAHLYGNLMNTYGDNGNILMLKYVAEKLGAHVTVDIVSLHDDFDENHYDIAFFGGGQDFEQSIIADDLPAKKESIDNYIQNDGVVLAICGGFQLLGQYYVEASGKRIEGLGVMGHYTLNQTNNRFIGDIKIHNEDFDETYYGFENHQGRTFLSDDQKPLGQVVYGNGNNEEKVGEGVHYKNVFGSYFHGPILSRNANLAYRLVTTALKKKYGQDIQLPAYEDILSQEIAEEYSDVKSKADFS</sequence>
<comment type="function">
    <text evidence="3 4">The lipid II isoglutaminyl synthase complex catalyzes the formation of alpha-D-isoglutamine in the cell wall lipid II stem peptide (PubMed:24044435, PubMed:30093673). The GatD subunit catalyzes the hydrolysis of glutamine to glutamate and ammonia. The resulting ammonia molecule is channeled to the active site of MurT (PubMed:30093673).</text>
</comment>
<comment type="catalytic activity">
    <reaction evidence="1 3 4">
        <text>beta-D-GlcNAc-(1-&gt;4)-Mur2Ac(oyl-L-Ala-gamma-D-Glu-L-Lys-D-Ala-D-Ala)-di-trans,octa-cis-undecaprenyl diphosphate + L-glutamine + ATP + H2O = beta-D-GlcNAc-(1-&gt;4)-Mur2Ac(oyl-L-Ala-D-isoglutaminyl-L-Lys-D-Ala-D-Ala)-di-trans,octa-cis-undecaprenyl diphosphate + L-glutamate + ADP + phosphate + H(+)</text>
        <dbReference type="Rhea" id="RHEA:57928"/>
        <dbReference type="ChEBI" id="CHEBI:15377"/>
        <dbReference type="ChEBI" id="CHEBI:15378"/>
        <dbReference type="ChEBI" id="CHEBI:29985"/>
        <dbReference type="ChEBI" id="CHEBI:30616"/>
        <dbReference type="ChEBI" id="CHEBI:43474"/>
        <dbReference type="ChEBI" id="CHEBI:58359"/>
        <dbReference type="ChEBI" id="CHEBI:60033"/>
        <dbReference type="ChEBI" id="CHEBI:62233"/>
        <dbReference type="ChEBI" id="CHEBI:456216"/>
        <dbReference type="EC" id="6.3.5.13"/>
    </reaction>
</comment>
<comment type="catalytic activity">
    <reaction evidence="1 4">
        <text>L-glutamine + H2O = L-glutamate + NH4(+)</text>
        <dbReference type="Rhea" id="RHEA:15889"/>
        <dbReference type="ChEBI" id="CHEBI:15377"/>
        <dbReference type="ChEBI" id="CHEBI:28938"/>
        <dbReference type="ChEBI" id="CHEBI:29985"/>
        <dbReference type="ChEBI" id="CHEBI:58359"/>
        <dbReference type="EC" id="3.5.1.2"/>
    </reaction>
</comment>
<comment type="biophysicochemical properties">
    <kinetics>
        <KM evidence="4">78 uM for L-glutamine</KM>
    </kinetics>
</comment>
<comment type="pathway">
    <text evidence="1 3">Cell wall biogenesis; peptidoglycan biosynthesis.</text>
</comment>
<comment type="subunit">
    <text evidence="1 4">Forms a heterodimer with MurT.</text>
</comment>
<comment type="disruption phenotype">
    <text evidence="4">Severe depletion of GatD/MurT produces a high proportion of aberrant cells, elongated or bulging.</text>
</comment>
<comment type="similarity">
    <text evidence="1 6">Belongs to the CobB/CobQ family. GatD subfamily.</text>
</comment>
<keyword id="KW-0002">3D-structure</keyword>
<keyword id="KW-0133">Cell shape</keyword>
<keyword id="KW-0961">Cell wall biogenesis/degradation</keyword>
<keyword id="KW-0315">Glutamine amidotransferase</keyword>
<keyword id="KW-0378">Hydrolase</keyword>
<keyword id="KW-0436">Ligase</keyword>
<keyword id="KW-0573">Peptidoglycan synthesis</keyword>
<keyword id="KW-1185">Reference proteome</keyword>
<evidence type="ECO:0000255" key="1">
    <source>
        <dbReference type="HAMAP-Rule" id="MF_02213"/>
    </source>
</evidence>
<evidence type="ECO:0000255" key="2">
    <source>
        <dbReference type="PROSITE-ProRule" id="PRU00606"/>
    </source>
</evidence>
<evidence type="ECO:0000269" key="3">
    <source>
    </source>
</evidence>
<evidence type="ECO:0000269" key="4">
    <source>
    </source>
</evidence>
<evidence type="ECO:0000303" key="5">
    <source>
    </source>
</evidence>
<evidence type="ECO:0000305" key="6"/>
<evidence type="ECO:0000305" key="7">
    <source>
    </source>
</evidence>
<evidence type="ECO:0000312" key="8">
    <source>
        <dbReference type="EMBL" id="AAL00248.1"/>
    </source>
</evidence>
<evidence type="ECO:0007744" key="9">
    <source>
        <dbReference type="PDB" id="6FQB"/>
    </source>
</evidence>
<evidence type="ECO:0007829" key="10">
    <source>
        <dbReference type="PDB" id="6FQB"/>
    </source>
</evidence>
<dbReference type="EC" id="6.3.5.13" evidence="1 3 4"/>
<dbReference type="EC" id="3.5.1.2" evidence="1 4"/>
<dbReference type="EMBL" id="AE007317">
    <property type="protein sequence ID" value="AAL00248.1"/>
    <property type="molecule type" value="Genomic_DNA"/>
</dbReference>
<dbReference type="PIR" id="C95185">
    <property type="entry name" value="C95185"/>
</dbReference>
<dbReference type="PIR" id="C98052">
    <property type="entry name" value="C98052"/>
</dbReference>
<dbReference type="RefSeq" id="NP_359037.1">
    <property type="nucleotide sequence ID" value="NC_003098.1"/>
</dbReference>
<dbReference type="RefSeq" id="WP_000263194.1">
    <property type="nucleotide sequence ID" value="NC_003098.1"/>
</dbReference>
<dbReference type="PDB" id="6FQB">
    <property type="method" value="X-ray"/>
    <property type="resolution" value="3.00 A"/>
    <property type="chains" value="E/F/G/H=1-260"/>
</dbReference>
<dbReference type="PDBsum" id="6FQB"/>
<dbReference type="SASBDB" id="Q8DNZ8"/>
<dbReference type="SMR" id="Q8DNZ8"/>
<dbReference type="STRING" id="171101.spr1444"/>
<dbReference type="GeneID" id="45653176"/>
<dbReference type="KEGG" id="spr:spr1444"/>
<dbReference type="PATRIC" id="fig|171101.6.peg.1560"/>
<dbReference type="eggNOG" id="COG3442">
    <property type="taxonomic scope" value="Bacteria"/>
</dbReference>
<dbReference type="HOGENOM" id="CLU_064047_1_0_9"/>
<dbReference type="BRENDA" id="6.3.5.13">
    <property type="organism ID" value="1960"/>
</dbReference>
<dbReference type="UniPathway" id="UPA00219"/>
<dbReference type="Proteomes" id="UP000000586">
    <property type="component" value="Chromosome"/>
</dbReference>
<dbReference type="GO" id="GO:0140282">
    <property type="term" value="F:carbon-nitrogen ligase activity on lipid II"/>
    <property type="evidence" value="ECO:0007669"/>
    <property type="project" value="UniProtKB-UniRule"/>
</dbReference>
<dbReference type="GO" id="GO:0004359">
    <property type="term" value="F:glutaminase activity"/>
    <property type="evidence" value="ECO:0007669"/>
    <property type="project" value="UniProtKB-UniRule"/>
</dbReference>
<dbReference type="GO" id="GO:0071555">
    <property type="term" value="P:cell wall organization"/>
    <property type="evidence" value="ECO:0007669"/>
    <property type="project" value="UniProtKB-KW"/>
</dbReference>
<dbReference type="GO" id="GO:0009236">
    <property type="term" value="P:cobalamin biosynthetic process"/>
    <property type="evidence" value="ECO:0007669"/>
    <property type="project" value="InterPro"/>
</dbReference>
<dbReference type="GO" id="GO:0009252">
    <property type="term" value="P:peptidoglycan biosynthetic process"/>
    <property type="evidence" value="ECO:0007669"/>
    <property type="project" value="UniProtKB-UniRule"/>
</dbReference>
<dbReference type="GO" id="GO:0008360">
    <property type="term" value="P:regulation of cell shape"/>
    <property type="evidence" value="ECO:0007669"/>
    <property type="project" value="UniProtKB-KW"/>
</dbReference>
<dbReference type="CDD" id="cd01750">
    <property type="entry name" value="GATase1_CobQ"/>
    <property type="match status" value="1"/>
</dbReference>
<dbReference type="Gene3D" id="3.40.50.880">
    <property type="match status" value="1"/>
</dbReference>
<dbReference type="HAMAP" id="MF_02213">
    <property type="entry name" value="Lipid_II_synth_GatD"/>
    <property type="match status" value="1"/>
</dbReference>
<dbReference type="InterPro" id="IPR029062">
    <property type="entry name" value="Class_I_gatase-like"/>
</dbReference>
<dbReference type="InterPro" id="IPR033949">
    <property type="entry name" value="CobQ_GATase1"/>
</dbReference>
<dbReference type="InterPro" id="IPR011698">
    <property type="entry name" value="GATase_3"/>
</dbReference>
<dbReference type="InterPro" id="IPR054859">
    <property type="entry name" value="isoglutsynth_GatD"/>
</dbReference>
<dbReference type="InterPro" id="IPR043702">
    <property type="entry name" value="Lipid_II_synth_GatD"/>
</dbReference>
<dbReference type="NCBIfam" id="NF045636">
    <property type="entry name" value="isoglutsynth_GatD"/>
    <property type="match status" value="1"/>
</dbReference>
<dbReference type="PANTHER" id="PTHR21343">
    <property type="entry name" value="DETHIOBIOTIN SYNTHETASE"/>
    <property type="match status" value="1"/>
</dbReference>
<dbReference type="PANTHER" id="PTHR21343:SF9">
    <property type="entry name" value="LIPID II ISOGLUTAMINYL SYNTHASE (GLUTAMINE-HYDROLYZING) SUBUNIT GATD"/>
    <property type="match status" value="1"/>
</dbReference>
<dbReference type="Pfam" id="PF07685">
    <property type="entry name" value="GATase_3"/>
    <property type="match status" value="1"/>
</dbReference>
<dbReference type="SUPFAM" id="SSF52317">
    <property type="entry name" value="Class I glutamine amidotransferase-like"/>
    <property type="match status" value="1"/>
</dbReference>
<dbReference type="PROSITE" id="PS51274">
    <property type="entry name" value="GATASE_COBBQ"/>
    <property type="match status" value="1"/>
</dbReference>